<accession>A5IKI7</accession>
<comment type="function">
    <text evidence="1">Cell wall formation. Catalyzes the addition of glutamate to the nucleotide precursor UDP-N-acetylmuramoyl-L-alanine (UMA).</text>
</comment>
<comment type="catalytic activity">
    <reaction evidence="1">
        <text>UDP-N-acetyl-alpha-D-muramoyl-L-alanine + D-glutamate + ATP = UDP-N-acetyl-alpha-D-muramoyl-L-alanyl-D-glutamate + ADP + phosphate + H(+)</text>
        <dbReference type="Rhea" id="RHEA:16429"/>
        <dbReference type="ChEBI" id="CHEBI:15378"/>
        <dbReference type="ChEBI" id="CHEBI:29986"/>
        <dbReference type="ChEBI" id="CHEBI:30616"/>
        <dbReference type="ChEBI" id="CHEBI:43474"/>
        <dbReference type="ChEBI" id="CHEBI:83898"/>
        <dbReference type="ChEBI" id="CHEBI:83900"/>
        <dbReference type="ChEBI" id="CHEBI:456216"/>
        <dbReference type="EC" id="6.3.2.9"/>
    </reaction>
</comment>
<comment type="pathway">
    <text evidence="1">Cell wall biogenesis; peptidoglycan biosynthesis.</text>
</comment>
<comment type="subcellular location">
    <subcellularLocation>
        <location evidence="1">Cytoplasm</location>
    </subcellularLocation>
</comment>
<comment type="similarity">
    <text evidence="1">Belongs to the MurCDEF family.</text>
</comment>
<keyword id="KW-0067">ATP-binding</keyword>
<keyword id="KW-0131">Cell cycle</keyword>
<keyword id="KW-0132">Cell division</keyword>
<keyword id="KW-0133">Cell shape</keyword>
<keyword id="KW-0961">Cell wall biogenesis/degradation</keyword>
<keyword id="KW-0963">Cytoplasm</keyword>
<keyword id="KW-0436">Ligase</keyword>
<keyword id="KW-0547">Nucleotide-binding</keyword>
<keyword id="KW-0573">Peptidoglycan synthesis</keyword>
<sequence>MRIGFLGFGKSNRSLLKYLLKHQEAKFFVSEAKTLDGETKKFLEEHSVEYEEGGHTEKLLECDVVYVSPGIKPDTSMIELLSSRGAKLSTELQFFLDNVDPKKVVGITGTDGKSTATALMHHVLSERGFKSFLGGNFGTPAVEALEGEYDYYVLEMSSFQLFWSERPYLSNFLVLNISEDHLDWHSSFEEYVDSKLKPVFLQTEGDLFVYNKHIERLKDLEGVRSRKIPFWTDENFATEKELIVRGKRYTLPGNYPYQMRENVLAVSVLYMEMFNELESFLELLRDFKPLPHRMEYLGQIDGRHFYNDSKATSTHAVLGALSNFDKVVLIMCGIGKKENYSLFVEKASPKLKHLIMFGEISKELAPFVGKIPHSIVENMEEAFEKAMEVSEKGDVILLSPGGASFDMYENYAKRGEHFREIFKRHGGDEV</sequence>
<protein>
    <recommendedName>
        <fullName evidence="1">UDP-N-acetylmuramoylalanine--D-glutamate ligase</fullName>
        <ecNumber evidence="1">6.3.2.9</ecNumber>
    </recommendedName>
    <alternativeName>
        <fullName evidence="1">D-glutamic acid-adding enzyme</fullName>
    </alternativeName>
    <alternativeName>
        <fullName evidence="1">UDP-N-acetylmuramoyl-L-alanyl-D-glutamate synthetase</fullName>
    </alternativeName>
</protein>
<dbReference type="EC" id="6.3.2.9" evidence="1"/>
<dbReference type="EMBL" id="CP000702">
    <property type="protein sequence ID" value="ABQ46710.1"/>
    <property type="molecule type" value="Genomic_DNA"/>
</dbReference>
<dbReference type="RefSeq" id="WP_011943295.1">
    <property type="nucleotide sequence ID" value="NC_009486.1"/>
</dbReference>
<dbReference type="SMR" id="A5IKI7"/>
<dbReference type="STRING" id="390874.Tpet_0690"/>
<dbReference type="KEGG" id="tpt:Tpet_0690"/>
<dbReference type="eggNOG" id="COG0771">
    <property type="taxonomic scope" value="Bacteria"/>
</dbReference>
<dbReference type="HOGENOM" id="CLU_032540_0_1_0"/>
<dbReference type="UniPathway" id="UPA00219"/>
<dbReference type="Proteomes" id="UP000006558">
    <property type="component" value="Chromosome"/>
</dbReference>
<dbReference type="GO" id="GO:0005737">
    <property type="term" value="C:cytoplasm"/>
    <property type="evidence" value="ECO:0007669"/>
    <property type="project" value="UniProtKB-SubCell"/>
</dbReference>
<dbReference type="GO" id="GO:0005524">
    <property type="term" value="F:ATP binding"/>
    <property type="evidence" value="ECO:0007669"/>
    <property type="project" value="UniProtKB-UniRule"/>
</dbReference>
<dbReference type="GO" id="GO:0008764">
    <property type="term" value="F:UDP-N-acetylmuramoylalanine-D-glutamate ligase activity"/>
    <property type="evidence" value="ECO:0007669"/>
    <property type="project" value="UniProtKB-UniRule"/>
</dbReference>
<dbReference type="GO" id="GO:0051301">
    <property type="term" value="P:cell division"/>
    <property type="evidence" value="ECO:0007669"/>
    <property type="project" value="UniProtKB-KW"/>
</dbReference>
<dbReference type="GO" id="GO:0071555">
    <property type="term" value="P:cell wall organization"/>
    <property type="evidence" value="ECO:0007669"/>
    <property type="project" value="UniProtKB-KW"/>
</dbReference>
<dbReference type="GO" id="GO:0009252">
    <property type="term" value="P:peptidoglycan biosynthetic process"/>
    <property type="evidence" value="ECO:0007669"/>
    <property type="project" value="UniProtKB-UniRule"/>
</dbReference>
<dbReference type="GO" id="GO:0008360">
    <property type="term" value="P:regulation of cell shape"/>
    <property type="evidence" value="ECO:0007669"/>
    <property type="project" value="UniProtKB-KW"/>
</dbReference>
<dbReference type="Gene3D" id="3.90.190.20">
    <property type="entry name" value="Mur ligase, C-terminal domain"/>
    <property type="match status" value="1"/>
</dbReference>
<dbReference type="Gene3D" id="3.40.1190.10">
    <property type="entry name" value="Mur-like, catalytic domain"/>
    <property type="match status" value="1"/>
</dbReference>
<dbReference type="Gene3D" id="3.40.50.720">
    <property type="entry name" value="NAD(P)-binding Rossmann-like Domain"/>
    <property type="match status" value="1"/>
</dbReference>
<dbReference type="HAMAP" id="MF_00639">
    <property type="entry name" value="MurD"/>
    <property type="match status" value="1"/>
</dbReference>
<dbReference type="InterPro" id="IPR036565">
    <property type="entry name" value="Mur-like_cat_sf"/>
</dbReference>
<dbReference type="InterPro" id="IPR004101">
    <property type="entry name" value="Mur_ligase_C"/>
</dbReference>
<dbReference type="InterPro" id="IPR036615">
    <property type="entry name" value="Mur_ligase_C_dom_sf"/>
</dbReference>
<dbReference type="InterPro" id="IPR013221">
    <property type="entry name" value="Mur_ligase_cen"/>
</dbReference>
<dbReference type="InterPro" id="IPR005762">
    <property type="entry name" value="MurD"/>
</dbReference>
<dbReference type="NCBIfam" id="TIGR01087">
    <property type="entry name" value="murD"/>
    <property type="match status" value="1"/>
</dbReference>
<dbReference type="PANTHER" id="PTHR43692">
    <property type="entry name" value="UDP-N-ACETYLMURAMOYLALANINE--D-GLUTAMATE LIGASE"/>
    <property type="match status" value="1"/>
</dbReference>
<dbReference type="PANTHER" id="PTHR43692:SF1">
    <property type="entry name" value="UDP-N-ACETYLMURAMOYLALANINE--D-GLUTAMATE LIGASE"/>
    <property type="match status" value="1"/>
</dbReference>
<dbReference type="Pfam" id="PF02875">
    <property type="entry name" value="Mur_ligase_C"/>
    <property type="match status" value="1"/>
</dbReference>
<dbReference type="Pfam" id="PF08245">
    <property type="entry name" value="Mur_ligase_M"/>
    <property type="match status" value="1"/>
</dbReference>
<dbReference type="Pfam" id="PF21799">
    <property type="entry name" value="MurD-like_N"/>
    <property type="match status" value="1"/>
</dbReference>
<dbReference type="Pfam" id="PF21377">
    <property type="entry name" value="MurD_N"/>
    <property type="match status" value="1"/>
</dbReference>
<dbReference type="SUPFAM" id="SSF51984">
    <property type="entry name" value="MurCD N-terminal domain"/>
    <property type="match status" value="1"/>
</dbReference>
<dbReference type="SUPFAM" id="SSF53623">
    <property type="entry name" value="MurD-like peptide ligases, catalytic domain"/>
    <property type="match status" value="1"/>
</dbReference>
<dbReference type="SUPFAM" id="SSF53244">
    <property type="entry name" value="MurD-like peptide ligases, peptide-binding domain"/>
    <property type="match status" value="1"/>
</dbReference>
<name>MURD_THEP1</name>
<organism>
    <name type="scientific">Thermotoga petrophila (strain ATCC BAA-488 / DSM 13995 / JCM 10881 / RKU-1)</name>
    <dbReference type="NCBI Taxonomy" id="390874"/>
    <lineage>
        <taxon>Bacteria</taxon>
        <taxon>Thermotogati</taxon>
        <taxon>Thermotogota</taxon>
        <taxon>Thermotogae</taxon>
        <taxon>Thermotogales</taxon>
        <taxon>Thermotogaceae</taxon>
        <taxon>Thermotoga</taxon>
    </lineage>
</organism>
<feature type="chain" id="PRO_1000056890" description="UDP-N-acetylmuramoylalanine--D-glutamate ligase">
    <location>
        <begin position="1"/>
        <end position="430"/>
    </location>
</feature>
<feature type="binding site" evidence="1">
    <location>
        <begin position="109"/>
        <end position="115"/>
    </location>
    <ligand>
        <name>ATP</name>
        <dbReference type="ChEBI" id="CHEBI:30616"/>
    </ligand>
</feature>
<reference key="1">
    <citation type="submission" date="2007-05" db="EMBL/GenBank/DDBJ databases">
        <title>Complete sequence of Thermotoga petrophila RKU-1.</title>
        <authorList>
            <consortium name="US DOE Joint Genome Institute"/>
            <person name="Copeland A."/>
            <person name="Lucas S."/>
            <person name="Lapidus A."/>
            <person name="Barry K."/>
            <person name="Glavina del Rio T."/>
            <person name="Dalin E."/>
            <person name="Tice H."/>
            <person name="Pitluck S."/>
            <person name="Sims D."/>
            <person name="Brettin T."/>
            <person name="Bruce D."/>
            <person name="Detter J.C."/>
            <person name="Han C."/>
            <person name="Tapia R."/>
            <person name="Schmutz J."/>
            <person name="Larimer F."/>
            <person name="Land M."/>
            <person name="Hauser L."/>
            <person name="Kyrpides N."/>
            <person name="Mikhailova N."/>
            <person name="Nelson K."/>
            <person name="Gogarten J.P."/>
            <person name="Noll K."/>
            <person name="Richardson P."/>
        </authorList>
    </citation>
    <scope>NUCLEOTIDE SEQUENCE [LARGE SCALE GENOMIC DNA]</scope>
    <source>
        <strain>ATCC BAA-488 / DSM 13995 / JCM 10881 / RKU-1</strain>
    </source>
</reference>
<proteinExistence type="inferred from homology"/>
<evidence type="ECO:0000255" key="1">
    <source>
        <dbReference type="HAMAP-Rule" id="MF_00639"/>
    </source>
</evidence>
<gene>
    <name evidence="1" type="primary">murD</name>
    <name type="ordered locus">Tpet_0690</name>
</gene>